<name>ARTE_METJA</name>
<evidence type="ECO:0000250" key="1">
    <source>
        <dbReference type="UniProtKB" id="D4GUZ4"/>
    </source>
</evidence>
<evidence type="ECO:0000255" key="2"/>
<evidence type="ECO:0000303" key="3">
    <source>
    </source>
</evidence>
<evidence type="ECO:0000305" key="4"/>
<evidence type="ECO:0000305" key="5">
    <source>
    </source>
</evidence>
<protein>
    <recommendedName>
        <fullName evidence="3">Probable archaeosortase E</fullName>
        <ecNumber evidence="1">3.4.22.-</ecNumber>
    </recommendedName>
</protein>
<dbReference type="EC" id="3.4.22.-" evidence="1"/>
<dbReference type="EMBL" id="L77117">
    <property type="protein sequence ID" value="AAB98013.1"/>
    <property type="molecule type" value="Genomic_DNA"/>
</dbReference>
<dbReference type="PIR" id="C64303">
    <property type="entry name" value="C64303"/>
</dbReference>
<dbReference type="SMR" id="Q60336"/>
<dbReference type="STRING" id="243232.MJ_0027"/>
<dbReference type="TCDB" id="9.B.297.4.1">
    <property type="family name" value="the archaeosortase/exosortase/rhomosortase (sortase) family"/>
</dbReference>
<dbReference type="PaxDb" id="243232-MJ_0027"/>
<dbReference type="EnsemblBacteria" id="AAB98013">
    <property type="protein sequence ID" value="AAB98013"/>
    <property type="gene ID" value="MJ_0027"/>
</dbReference>
<dbReference type="KEGG" id="mja:MJ_0027"/>
<dbReference type="eggNOG" id="arCOG04471">
    <property type="taxonomic scope" value="Archaea"/>
</dbReference>
<dbReference type="HOGENOM" id="CLU_134207_0_0_2"/>
<dbReference type="InParanoid" id="Q60336"/>
<dbReference type="OrthoDB" id="65574at2157"/>
<dbReference type="Proteomes" id="UP000000805">
    <property type="component" value="Chromosome"/>
</dbReference>
<dbReference type="GO" id="GO:0005886">
    <property type="term" value="C:plasma membrane"/>
    <property type="evidence" value="ECO:0007669"/>
    <property type="project" value="UniProtKB-SubCell"/>
</dbReference>
<dbReference type="GO" id="GO:0008233">
    <property type="term" value="F:peptidase activity"/>
    <property type="evidence" value="ECO:0007669"/>
    <property type="project" value="UniProtKB-KW"/>
</dbReference>
<dbReference type="GO" id="GO:0006508">
    <property type="term" value="P:proteolysis"/>
    <property type="evidence" value="ECO:0007669"/>
    <property type="project" value="UniProtKB-KW"/>
</dbReference>
<dbReference type="InterPro" id="IPR026485">
    <property type="entry name" value="Archaeo_ArtE"/>
</dbReference>
<dbReference type="InterPro" id="IPR026392">
    <property type="entry name" value="Exo/Archaeosortase_dom"/>
</dbReference>
<dbReference type="InterPro" id="IPR019127">
    <property type="entry name" value="Exosortase"/>
</dbReference>
<dbReference type="NCBIfam" id="TIGR04124">
    <property type="entry name" value="archaeo_artE"/>
    <property type="match status" value="1"/>
</dbReference>
<dbReference type="NCBIfam" id="TIGR04178">
    <property type="entry name" value="exo_archaeo"/>
    <property type="match status" value="1"/>
</dbReference>
<dbReference type="Pfam" id="PF09721">
    <property type="entry name" value="Exosortase_EpsH"/>
    <property type="match status" value="1"/>
</dbReference>
<keyword id="KW-1003">Cell membrane</keyword>
<keyword id="KW-0378">Hydrolase</keyword>
<keyword id="KW-0472">Membrane</keyword>
<keyword id="KW-0645">Protease</keyword>
<keyword id="KW-1185">Reference proteome</keyword>
<keyword id="KW-0812">Transmembrane</keyword>
<keyword id="KW-1133">Transmembrane helix</keyword>
<sequence>MGSLLMERNFMVEDTFTNGKLSKKEKILFLIKFYIIFLVVFFILSYFGKYLIGIVTYLSYIFTKIIISDARLADNFIYLPNNTVEVVEECTGSFLIAGLLALIIVYSKNIKEFIIGIFFVLLAFFVNIFRIVLICYLVNMHPESSYLYHEIAGYGVILTLVPVLVIGYLKIIEKYRHSSNKSHL</sequence>
<gene>
    <name evidence="3" type="primary">artE</name>
    <name type="ordered locus">MJ0027</name>
</gene>
<comment type="function">
    <text evidence="1">Transpeptidase that recognizes and modifies its substrate by proteolytic cleavage of a sorting signal. Following cleavage, a covalent intermediate is formed via a thioester bond between the archaeosortase and its substrate, which is then transferred and covalently attached to the cell membrane.</text>
</comment>
<comment type="subcellular location">
    <subcellularLocation>
        <location evidence="4">Cell membrane</location>
        <topology evidence="2">Multi-pass membrane protein</topology>
    </subcellularLocation>
</comment>
<comment type="similarity">
    <text evidence="5">Belongs to the exosortase/archaeosortase family. Archaeosortase E subfamily.</text>
</comment>
<proteinExistence type="inferred from homology"/>
<accession>Q60336</accession>
<feature type="chain" id="PRO_0000106660" description="Probable archaeosortase E">
    <location>
        <begin position="1"/>
        <end position="184"/>
    </location>
</feature>
<feature type="transmembrane region" description="Helical" evidence="2">
    <location>
        <begin position="27"/>
        <end position="47"/>
    </location>
</feature>
<feature type="transmembrane region" description="Helical" evidence="2">
    <location>
        <begin position="86"/>
        <end position="106"/>
    </location>
</feature>
<feature type="transmembrane region" description="Helical" evidence="2">
    <location>
        <begin position="114"/>
        <end position="134"/>
    </location>
</feature>
<feature type="transmembrane region" description="Helical" evidence="2">
    <location>
        <begin position="151"/>
        <end position="171"/>
    </location>
</feature>
<feature type="active site" description="Acyl-thioester intermediate" evidence="1">
    <location>
        <position position="90"/>
    </location>
</feature>
<feature type="active site" description="Proton donor" evidence="1">
    <location>
        <position position="130"/>
    </location>
</feature>
<organism>
    <name type="scientific">Methanocaldococcus jannaschii (strain ATCC 43067 / DSM 2661 / JAL-1 / JCM 10045 / NBRC 100440)</name>
    <name type="common">Methanococcus jannaschii</name>
    <dbReference type="NCBI Taxonomy" id="243232"/>
    <lineage>
        <taxon>Archaea</taxon>
        <taxon>Methanobacteriati</taxon>
        <taxon>Methanobacteriota</taxon>
        <taxon>Methanomada group</taxon>
        <taxon>Methanococci</taxon>
        <taxon>Methanococcales</taxon>
        <taxon>Methanocaldococcaceae</taxon>
        <taxon>Methanocaldococcus</taxon>
    </lineage>
</organism>
<reference key="1">
    <citation type="journal article" date="1996" name="Science">
        <title>Complete genome sequence of the methanogenic archaeon, Methanococcus jannaschii.</title>
        <authorList>
            <person name="Bult C.J."/>
            <person name="White O."/>
            <person name="Olsen G.J."/>
            <person name="Zhou L."/>
            <person name="Fleischmann R.D."/>
            <person name="Sutton G.G."/>
            <person name="Blake J.A."/>
            <person name="FitzGerald L.M."/>
            <person name="Clayton R.A."/>
            <person name="Gocayne J.D."/>
            <person name="Kerlavage A.R."/>
            <person name="Dougherty B.A."/>
            <person name="Tomb J.-F."/>
            <person name="Adams M.D."/>
            <person name="Reich C.I."/>
            <person name="Overbeek R."/>
            <person name="Kirkness E.F."/>
            <person name="Weinstock K.G."/>
            <person name="Merrick J.M."/>
            <person name="Glodek A."/>
            <person name="Scott J.L."/>
            <person name="Geoghagen N.S.M."/>
            <person name="Weidman J.F."/>
            <person name="Fuhrmann J.L."/>
            <person name="Nguyen D."/>
            <person name="Utterback T.R."/>
            <person name="Kelley J.M."/>
            <person name="Peterson J.D."/>
            <person name="Sadow P.W."/>
            <person name="Hanna M.C."/>
            <person name="Cotton M.D."/>
            <person name="Roberts K.M."/>
            <person name="Hurst M.A."/>
            <person name="Kaine B.P."/>
            <person name="Borodovsky M."/>
            <person name="Klenk H.-P."/>
            <person name="Fraser C.M."/>
            <person name="Smith H.O."/>
            <person name="Woese C.R."/>
            <person name="Venter J.C."/>
        </authorList>
    </citation>
    <scope>NUCLEOTIDE SEQUENCE [LARGE SCALE GENOMIC DNA]</scope>
    <source>
        <strain>ATCC 43067 / DSM 2661 / JAL-1 / JCM 10045 / NBRC 100440</strain>
    </source>
</reference>
<reference key="2">
    <citation type="journal article" date="2012" name="J. Bacteriol.">
        <title>Archaeosortases and exosortases are widely distributed systems linking membrane transit with posttranslational modification.</title>
        <authorList>
            <person name="Haft D.H."/>
            <person name="Payne S.H."/>
            <person name="Selengut J.D."/>
        </authorList>
    </citation>
    <scope>NOMENCLATURE</scope>
    <scope>GENE FAMILY</scope>
</reference>